<comment type="function">
    <text evidence="1">Functions as a zinc transporter transporting Zn(2+) from the Golgi apparatus to the cytosol and thus influences the zinc level at least in areas of the cytosol. May regulate beige adipocyte differentiation.</text>
</comment>
<comment type="catalytic activity">
    <reaction evidence="1">
        <text>Zn(2+)(in) = Zn(2+)(out)</text>
        <dbReference type="Rhea" id="RHEA:29351"/>
        <dbReference type="ChEBI" id="CHEBI:29105"/>
    </reaction>
</comment>
<comment type="subunit">
    <text evidence="2">Homodimer.</text>
</comment>
<comment type="subcellular location">
    <subcellularLocation>
        <location evidence="1">Golgi apparatus membrane</location>
        <topology evidence="2">Multi-pass membrane protein</topology>
    </subcellularLocation>
    <subcellularLocation>
        <location evidence="2">Cytoplasmic vesicle membrane</location>
    </subcellularLocation>
    <subcellularLocation>
        <location evidence="2">Endoplasmic reticulum membrane</location>
    </subcellularLocation>
</comment>
<comment type="similarity">
    <text evidence="4">Belongs to the ZIP transporter (TC 2.A.5) family.</text>
</comment>
<evidence type="ECO:0000250" key="1">
    <source>
        <dbReference type="UniProtKB" id="Q8BZH0"/>
    </source>
</evidence>
<evidence type="ECO:0000250" key="2">
    <source>
        <dbReference type="UniProtKB" id="Q96H72"/>
    </source>
</evidence>
<evidence type="ECO:0000255" key="3"/>
<evidence type="ECO:0000305" key="4"/>
<proteinExistence type="evidence at transcript level"/>
<dbReference type="EMBL" id="BC140552">
    <property type="protein sequence ID" value="AAI40553.1"/>
    <property type="molecule type" value="mRNA"/>
</dbReference>
<dbReference type="RefSeq" id="NP_001091601.1">
    <property type="nucleotide sequence ID" value="NM_001098132.1"/>
</dbReference>
<dbReference type="SMR" id="A5D7H1"/>
<dbReference type="FunCoup" id="A5D7H1">
    <property type="interactions" value="1466"/>
</dbReference>
<dbReference type="STRING" id="9913.ENSBTAP00000047569"/>
<dbReference type="PaxDb" id="9913-ENSBTAP00000047569"/>
<dbReference type="Ensembl" id="ENSBTAT00000056812.4">
    <property type="protein sequence ID" value="ENSBTAP00000047569.4"/>
    <property type="gene ID" value="ENSBTAG00000019436.7"/>
</dbReference>
<dbReference type="GeneID" id="614946"/>
<dbReference type="KEGG" id="bta:614946"/>
<dbReference type="CTD" id="91252"/>
<dbReference type="VGNC" id="VGNC:34861">
    <property type="gene designation" value="SLC39A13"/>
</dbReference>
<dbReference type="eggNOG" id="KOG2694">
    <property type="taxonomic scope" value="Eukaryota"/>
</dbReference>
<dbReference type="GeneTree" id="ENSGT00940000157349"/>
<dbReference type="HOGENOM" id="CLU_015114_0_2_1"/>
<dbReference type="InParanoid" id="A5D7H1"/>
<dbReference type="OrthoDB" id="200954at2759"/>
<dbReference type="TreeFam" id="TF318470"/>
<dbReference type="Proteomes" id="UP000009136">
    <property type="component" value="Chromosome 15"/>
</dbReference>
<dbReference type="GO" id="GO:0030659">
    <property type="term" value="C:cytoplasmic vesicle membrane"/>
    <property type="evidence" value="ECO:0000250"/>
    <property type="project" value="UniProtKB"/>
</dbReference>
<dbReference type="GO" id="GO:0005789">
    <property type="term" value="C:endoplasmic reticulum membrane"/>
    <property type="evidence" value="ECO:0007669"/>
    <property type="project" value="UniProtKB-SubCell"/>
</dbReference>
<dbReference type="GO" id="GO:0000139">
    <property type="term" value="C:Golgi membrane"/>
    <property type="evidence" value="ECO:0007669"/>
    <property type="project" value="UniProtKB-SubCell"/>
</dbReference>
<dbReference type="GO" id="GO:0048471">
    <property type="term" value="C:perinuclear region of cytoplasm"/>
    <property type="evidence" value="ECO:0007669"/>
    <property type="project" value="Ensembl"/>
</dbReference>
<dbReference type="GO" id="GO:0042803">
    <property type="term" value="F:protein homodimerization activity"/>
    <property type="evidence" value="ECO:0007669"/>
    <property type="project" value="Ensembl"/>
</dbReference>
<dbReference type="GO" id="GO:0005385">
    <property type="term" value="F:zinc ion transmembrane transporter activity"/>
    <property type="evidence" value="ECO:0000250"/>
    <property type="project" value="UniProtKB"/>
</dbReference>
<dbReference type="GO" id="GO:0050873">
    <property type="term" value="P:brown fat cell differentiation"/>
    <property type="evidence" value="ECO:0000250"/>
    <property type="project" value="UniProtKB"/>
</dbReference>
<dbReference type="GO" id="GO:0061448">
    <property type="term" value="P:connective tissue development"/>
    <property type="evidence" value="ECO:0007669"/>
    <property type="project" value="Ensembl"/>
</dbReference>
<dbReference type="GO" id="GO:0006882">
    <property type="term" value="P:intracellular zinc ion homeostasis"/>
    <property type="evidence" value="ECO:0000318"/>
    <property type="project" value="GO_Central"/>
</dbReference>
<dbReference type="GO" id="GO:0071577">
    <property type="term" value="P:zinc ion transmembrane transport"/>
    <property type="evidence" value="ECO:0000318"/>
    <property type="project" value="GO_Central"/>
</dbReference>
<dbReference type="GO" id="GO:0006829">
    <property type="term" value="P:zinc ion transport"/>
    <property type="evidence" value="ECO:0000250"/>
    <property type="project" value="UniProtKB"/>
</dbReference>
<dbReference type="InterPro" id="IPR003689">
    <property type="entry name" value="ZIP"/>
</dbReference>
<dbReference type="PANTHER" id="PTHR16950">
    <property type="entry name" value="ZINC TRANSPORTER SLC39A7 HISTIDINE-RICH MEMBRANE PROTEIN KE4"/>
    <property type="match status" value="1"/>
</dbReference>
<dbReference type="PANTHER" id="PTHR16950:SF16">
    <property type="entry name" value="ZINC TRANSPORTER ZIP13"/>
    <property type="match status" value="1"/>
</dbReference>
<dbReference type="Pfam" id="PF02535">
    <property type="entry name" value="Zip"/>
    <property type="match status" value="2"/>
</dbReference>
<accession>A5D7H1</accession>
<name>S39AD_BOVIN</name>
<organism>
    <name type="scientific">Bos taurus</name>
    <name type="common">Bovine</name>
    <dbReference type="NCBI Taxonomy" id="9913"/>
    <lineage>
        <taxon>Eukaryota</taxon>
        <taxon>Metazoa</taxon>
        <taxon>Chordata</taxon>
        <taxon>Craniata</taxon>
        <taxon>Vertebrata</taxon>
        <taxon>Euteleostomi</taxon>
        <taxon>Mammalia</taxon>
        <taxon>Eutheria</taxon>
        <taxon>Laurasiatheria</taxon>
        <taxon>Artiodactyla</taxon>
        <taxon>Ruminantia</taxon>
        <taxon>Pecora</taxon>
        <taxon>Bovidae</taxon>
        <taxon>Bovinae</taxon>
        <taxon>Bos</taxon>
    </lineage>
</organism>
<keyword id="KW-0968">Cytoplasmic vesicle</keyword>
<keyword id="KW-0256">Endoplasmic reticulum</keyword>
<keyword id="KW-0333">Golgi apparatus</keyword>
<keyword id="KW-0406">Ion transport</keyword>
<keyword id="KW-0472">Membrane</keyword>
<keyword id="KW-1185">Reference proteome</keyword>
<keyword id="KW-0812">Transmembrane</keyword>
<keyword id="KW-1133">Transmembrane helix</keyword>
<keyword id="KW-0813">Transport</keyword>
<keyword id="KW-0862">Zinc</keyword>
<keyword id="KW-0864">Zinc transport</keyword>
<gene>
    <name evidence="2" type="primary">SLC39A13</name>
    <name type="synonym">ZIP13</name>
</gene>
<feature type="chain" id="PRO_0000312308" description="Zinc transporter ZIP13">
    <location>
        <begin position="1"/>
        <end position="423"/>
    </location>
</feature>
<feature type="topological domain" description="Lumenal" evidence="3">
    <location>
        <begin position="1"/>
        <end position="15"/>
    </location>
</feature>
<feature type="transmembrane region" description="Helical" evidence="3">
    <location>
        <begin position="16"/>
        <end position="36"/>
    </location>
</feature>
<feature type="topological domain" description="Cytoplasmic" evidence="3">
    <location>
        <begin position="37"/>
        <end position="68"/>
    </location>
</feature>
<feature type="transmembrane region" description="Helical" evidence="3">
    <location>
        <begin position="69"/>
        <end position="89"/>
    </location>
</feature>
<feature type="topological domain" description="Lumenal" evidence="3">
    <location>
        <begin position="90"/>
        <end position="108"/>
    </location>
</feature>
<feature type="transmembrane region" description="Helical" evidence="3">
    <location>
        <begin position="109"/>
        <end position="129"/>
    </location>
</feature>
<feature type="topological domain" description="Cytoplasmic" evidence="3">
    <location>
        <begin position="130"/>
        <end position="149"/>
    </location>
</feature>
<feature type="transmembrane region" description="Helical" evidence="3">
    <location>
        <begin position="150"/>
        <end position="170"/>
    </location>
</feature>
<feature type="topological domain" description="Lumenal" evidence="3">
    <location>
        <begin position="171"/>
        <end position="235"/>
    </location>
</feature>
<feature type="transmembrane region" description="Helical" evidence="3">
    <location>
        <begin position="236"/>
        <end position="256"/>
    </location>
</feature>
<feature type="topological domain" description="Cytoplasmic" evidence="3">
    <location>
        <begin position="257"/>
        <end position="278"/>
    </location>
</feature>
<feature type="transmembrane region" description="Helical" evidence="3">
    <location>
        <begin position="279"/>
        <end position="299"/>
    </location>
</feature>
<feature type="topological domain" description="Lumenal" evidence="3">
    <location>
        <begin position="300"/>
        <end position="368"/>
    </location>
</feature>
<feature type="transmembrane region" description="Helical" evidence="3">
    <location>
        <begin position="369"/>
        <end position="389"/>
    </location>
</feature>
<feature type="topological domain" description="Cytoplasmic" evidence="3">
    <location>
        <begin position="390"/>
        <end position="401"/>
    </location>
</feature>
<feature type="transmembrane region" description="Helical" evidence="3">
    <location>
        <begin position="402"/>
        <end position="422"/>
    </location>
</feature>
<feature type="topological domain" description="Lumenal" evidence="3">
    <location>
        <position position="423"/>
    </location>
</feature>
<feature type="short sequence motif" description="XEXPHE-motif">
    <location>
        <begin position="257"/>
        <end position="262"/>
    </location>
</feature>
<sequence>MPGCPCPGIGMAGQRLLFLAALALELLGGAGGSQQALRSRGVAAACRLDSKESESWGALLSGERLETWICSLLGSLMVGLSGVFPLLVIPLEMGTTLRSEAGARRLKQLLSFALGGLLGNVFLHLLPEAWAYTNSASSGGERQSLQQQQQLGLWVIAGFLTFLVLEKLFFDSKGKEETSQAPSKDPAAAAALNGGHYLAQPAAEPGPSAVVRNIKVSGYLNLLANTIDNFTHGLAVAASFLVSKKIGLLTTMAILLHEIPHEVGDFAILLRAGFDRWSAAKLQLSTALGGLLGACFAICAQSPKGVGTGVGVVAVRRGALAEGHGRPDPGIRARLCSGPPRGMGGGRYTWPPSPPQPVRAPPPATEETVAWILPFTSGGFLYIALVNVLPDLLEEDDPWRSLQQVLLLCAGIVVMVLFSVFVE</sequence>
<protein>
    <recommendedName>
        <fullName evidence="1">Zinc transporter ZIP13</fullName>
    </recommendedName>
    <alternativeName>
        <fullName>Solute carrier family 39 member 13</fullName>
    </alternativeName>
    <alternativeName>
        <fullName>Zrt- and Irt-like protein 13</fullName>
        <shortName>ZIP-13</shortName>
    </alternativeName>
</protein>
<reference key="1">
    <citation type="submission" date="2007-04" db="EMBL/GenBank/DDBJ databases">
        <authorList>
            <consortium name="NIH - Mammalian Gene Collection (MGC) project"/>
        </authorList>
    </citation>
    <scope>NUCLEOTIDE SEQUENCE [LARGE SCALE MRNA]</scope>
    <source>
        <strain>Hereford</strain>
        <tissue>Fetal skin</tissue>
    </source>
</reference>